<proteinExistence type="inferred from homology"/>
<accession>Q88Y39</accession>
<accession>F9UMF2</accession>
<feature type="chain" id="PRO_0000195881" description="Aspartate--ammonia ligase">
    <location>
        <begin position="1"/>
        <end position="322"/>
    </location>
</feature>
<evidence type="ECO:0000255" key="1">
    <source>
        <dbReference type="HAMAP-Rule" id="MF_00555"/>
    </source>
</evidence>
<keyword id="KW-0028">Amino-acid biosynthesis</keyword>
<keyword id="KW-0061">Asparagine biosynthesis</keyword>
<keyword id="KW-0067">ATP-binding</keyword>
<keyword id="KW-0963">Cytoplasm</keyword>
<keyword id="KW-0436">Ligase</keyword>
<keyword id="KW-0547">Nucleotide-binding</keyword>
<keyword id="KW-1185">Reference proteome</keyword>
<comment type="catalytic activity">
    <reaction evidence="1">
        <text>L-aspartate + NH4(+) + ATP = L-asparagine + AMP + diphosphate + H(+)</text>
        <dbReference type="Rhea" id="RHEA:11372"/>
        <dbReference type="ChEBI" id="CHEBI:15378"/>
        <dbReference type="ChEBI" id="CHEBI:28938"/>
        <dbReference type="ChEBI" id="CHEBI:29991"/>
        <dbReference type="ChEBI" id="CHEBI:30616"/>
        <dbReference type="ChEBI" id="CHEBI:33019"/>
        <dbReference type="ChEBI" id="CHEBI:58048"/>
        <dbReference type="ChEBI" id="CHEBI:456215"/>
        <dbReference type="EC" id="6.3.1.1"/>
    </reaction>
</comment>
<comment type="pathway">
    <text evidence="1">Amino-acid biosynthesis; L-asparagine biosynthesis; L-asparagine from L-aspartate (ammonia route): step 1/1.</text>
</comment>
<comment type="subcellular location">
    <subcellularLocation>
        <location evidence="1">Cytoplasm</location>
    </subcellularLocation>
</comment>
<comment type="similarity">
    <text evidence="1">Belongs to the class-II aminoacyl-tRNA synthetase family. AsnA subfamily.</text>
</comment>
<gene>
    <name evidence="1" type="primary">asnA</name>
    <name type="ordered locus">lp_0957</name>
</gene>
<protein>
    <recommendedName>
        <fullName evidence="1">Aspartate--ammonia ligase</fullName>
        <ecNumber evidence="1">6.3.1.1</ecNumber>
    </recommendedName>
    <alternativeName>
        <fullName evidence="1">Asparagine synthetase A</fullName>
    </alternativeName>
</protein>
<dbReference type="EC" id="6.3.1.1" evidence="1"/>
<dbReference type="EMBL" id="AL935263">
    <property type="protein sequence ID" value="CCC78391.1"/>
    <property type="molecule type" value="Genomic_DNA"/>
</dbReference>
<dbReference type="RefSeq" id="YP_004888905.1">
    <property type="nucleotide sequence ID" value="NC_004567.2"/>
</dbReference>
<dbReference type="SMR" id="Q88Y39"/>
<dbReference type="STRING" id="220668.lp_0957"/>
<dbReference type="EnsemblBacteria" id="CCC78391">
    <property type="protein sequence ID" value="CCC78391"/>
    <property type="gene ID" value="lp_0957"/>
</dbReference>
<dbReference type="KEGG" id="lpl:lp_0957"/>
<dbReference type="PATRIC" id="fig|220668.9.peg.814"/>
<dbReference type="eggNOG" id="COG2502">
    <property type="taxonomic scope" value="Bacteria"/>
</dbReference>
<dbReference type="HOGENOM" id="CLU_071543_0_0_9"/>
<dbReference type="OrthoDB" id="9766088at2"/>
<dbReference type="PhylomeDB" id="Q88Y39"/>
<dbReference type="UniPathway" id="UPA00134">
    <property type="reaction ID" value="UER00194"/>
</dbReference>
<dbReference type="Proteomes" id="UP000000432">
    <property type="component" value="Chromosome"/>
</dbReference>
<dbReference type="GO" id="GO:0005829">
    <property type="term" value="C:cytosol"/>
    <property type="evidence" value="ECO:0007669"/>
    <property type="project" value="TreeGrafter"/>
</dbReference>
<dbReference type="GO" id="GO:0004071">
    <property type="term" value="F:aspartate-ammonia ligase activity"/>
    <property type="evidence" value="ECO:0007669"/>
    <property type="project" value="UniProtKB-UniRule"/>
</dbReference>
<dbReference type="GO" id="GO:0005524">
    <property type="term" value="F:ATP binding"/>
    <property type="evidence" value="ECO:0007669"/>
    <property type="project" value="UniProtKB-UniRule"/>
</dbReference>
<dbReference type="GO" id="GO:0140096">
    <property type="term" value="F:catalytic activity, acting on a protein"/>
    <property type="evidence" value="ECO:0007669"/>
    <property type="project" value="UniProtKB-ARBA"/>
</dbReference>
<dbReference type="GO" id="GO:0016740">
    <property type="term" value="F:transferase activity"/>
    <property type="evidence" value="ECO:0007669"/>
    <property type="project" value="UniProtKB-ARBA"/>
</dbReference>
<dbReference type="GO" id="GO:0070981">
    <property type="term" value="P:L-asparagine biosynthetic process"/>
    <property type="evidence" value="ECO:0007669"/>
    <property type="project" value="UniProtKB-UniRule"/>
</dbReference>
<dbReference type="Gene3D" id="3.30.930.10">
    <property type="entry name" value="Bira Bifunctional Protein, Domain 2"/>
    <property type="match status" value="1"/>
</dbReference>
<dbReference type="HAMAP" id="MF_00555">
    <property type="entry name" value="AsnA"/>
    <property type="match status" value="1"/>
</dbReference>
<dbReference type="InterPro" id="IPR006195">
    <property type="entry name" value="aa-tRNA-synth_II"/>
</dbReference>
<dbReference type="InterPro" id="IPR045864">
    <property type="entry name" value="aa-tRNA-synth_II/BPL/LPL"/>
</dbReference>
<dbReference type="InterPro" id="IPR004618">
    <property type="entry name" value="AsnA"/>
</dbReference>
<dbReference type="NCBIfam" id="TIGR00669">
    <property type="entry name" value="asnA"/>
    <property type="match status" value="1"/>
</dbReference>
<dbReference type="PANTHER" id="PTHR30073">
    <property type="entry name" value="ASPARTATE--AMMONIA LIGASE"/>
    <property type="match status" value="1"/>
</dbReference>
<dbReference type="PANTHER" id="PTHR30073:SF5">
    <property type="entry name" value="ASPARTATE--AMMONIA LIGASE"/>
    <property type="match status" value="1"/>
</dbReference>
<dbReference type="Pfam" id="PF03590">
    <property type="entry name" value="AsnA"/>
    <property type="match status" value="1"/>
</dbReference>
<dbReference type="PIRSF" id="PIRSF001555">
    <property type="entry name" value="Asp_ammon_ligase"/>
    <property type="match status" value="1"/>
</dbReference>
<dbReference type="SUPFAM" id="SSF55681">
    <property type="entry name" value="Class II aaRS and biotin synthetases"/>
    <property type="match status" value="1"/>
</dbReference>
<dbReference type="PROSITE" id="PS50862">
    <property type="entry name" value="AA_TRNA_LIGASE_II"/>
    <property type="match status" value="1"/>
</dbReference>
<sequence length="322" mass="37552">MHLIIPKDYDPKLSVKETQQAIRYIRETFQDEFGKQLNLSRLSAPMFVEKKTGLNDNLNGVEKPVSFTMQDMGDEQIEIVHSLAKWKRVALKRYGFDMHEGLYTNMNAIRKDEDLDNYHSAYVDQWDWEKVISKEERTVETLKAAVRQIFKVIKHMEHEVWYKFPQAVHHLPDEIHFLTTQELEDMYPDMTPRERENAICKKLGCVFLMQIGWKLDSGERHDGRAPDYDDWKLNGDILFWYEPLDQAIEISSMGIRVDAESMKKQLKDVDAEDRLSLPYHQMILNADVPYTIGGGIGQSRLCMLLLGKAHVGEVQAALWHKP</sequence>
<reference key="1">
    <citation type="journal article" date="2003" name="Proc. Natl. Acad. Sci. U.S.A.">
        <title>Complete genome sequence of Lactobacillus plantarum WCFS1.</title>
        <authorList>
            <person name="Kleerebezem M."/>
            <person name="Boekhorst J."/>
            <person name="van Kranenburg R."/>
            <person name="Molenaar D."/>
            <person name="Kuipers O.P."/>
            <person name="Leer R."/>
            <person name="Tarchini R."/>
            <person name="Peters S.A."/>
            <person name="Sandbrink H.M."/>
            <person name="Fiers M.W.E.J."/>
            <person name="Stiekema W."/>
            <person name="Klein Lankhorst R.M."/>
            <person name="Bron P.A."/>
            <person name="Hoffer S.M."/>
            <person name="Nierop Groot M.N."/>
            <person name="Kerkhoven R."/>
            <person name="De Vries M."/>
            <person name="Ursing B."/>
            <person name="De Vos W.M."/>
            <person name="Siezen R.J."/>
        </authorList>
    </citation>
    <scope>NUCLEOTIDE SEQUENCE [LARGE SCALE GENOMIC DNA]</scope>
    <source>
        <strain>ATCC BAA-793 / NCIMB 8826 / WCFS1</strain>
    </source>
</reference>
<reference key="2">
    <citation type="journal article" date="2012" name="J. Bacteriol.">
        <title>Complete resequencing and reannotation of the Lactobacillus plantarum WCFS1 genome.</title>
        <authorList>
            <person name="Siezen R.J."/>
            <person name="Francke C."/>
            <person name="Renckens B."/>
            <person name="Boekhorst J."/>
            <person name="Wels M."/>
            <person name="Kleerebezem M."/>
            <person name="van Hijum S.A."/>
        </authorList>
    </citation>
    <scope>NUCLEOTIDE SEQUENCE [LARGE SCALE GENOMIC DNA]</scope>
    <scope>GENOME REANNOTATION</scope>
    <source>
        <strain>ATCC BAA-793 / NCIMB 8826 / WCFS1</strain>
    </source>
</reference>
<name>ASNA_LACPL</name>
<organism>
    <name type="scientific">Lactiplantibacillus plantarum (strain ATCC BAA-793 / NCIMB 8826 / WCFS1)</name>
    <name type="common">Lactobacillus plantarum</name>
    <dbReference type="NCBI Taxonomy" id="220668"/>
    <lineage>
        <taxon>Bacteria</taxon>
        <taxon>Bacillati</taxon>
        <taxon>Bacillota</taxon>
        <taxon>Bacilli</taxon>
        <taxon>Lactobacillales</taxon>
        <taxon>Lactobacillaceae</taxon>
        <taxon>Lactiplantibacillus</taxon>
    </lineage>
</organism>